<sequence length="512" mass="55689">MDTTTAKQASTKFVVLGLLLGILMSAMDNTIVATAMGNIVADLGSFDKFAWVTASYMVAVMAGMPIYGKLSDMYGRKRFFLFGLIFFLIGSALCGIAQTMNQLIIFRAIQGIGGGALLPIAFTIIFDLFPPEKRGKMSGMFGAVFGLSSVLGPLLGAIITDSISWHWVFYINVPIGALSLFFIIRYYKESLEHRKQKIDWGGAITLVVSIVCLMFALELGGKTYDWNSIQIIGLFIVFAVFFIAFFIVERKAEEPIISFWMFKNRLFATAQILAFLYGGTFIILAVFIPIFVQAVYGSSATSAGFILTPMMIGSVIGSMIGGIFQTKASFRNLMLISVIAFFIGMLLLSNMTPDTARVWLTVFMMISGFGVGFNFSLLPAASMNDLEPRFRGTANSTNSFLRSFGMTLGVTIFGTVQTNVFTNKLNDAFSGMKGSAGSGAAQNIGDPQEIFQAGTRSQIPDAILNRIIDAMSSSITYVFLLALIPIVLAAVTILFMGKARVKTTAEMTKKAN</sequence>
<dbReference type="EMBL" id="D50098">
    <property type="protein sequence ID" value="BAA08793.1"/>
    <property type="molecule type" value="Genomic_DNA"/>
</dbReference>
<dbReference type="EMBL" id="AL009126">
    <property type="protein sequence ID" value="CAB12101.2"/>
    <property type="molecule type" value="Genomic_DNA"/>
</dbReference>
<dbReference type="RefSeq" id="NP_388189.2">
    <property type="nucleotide sequence ID" value="NC_000964.3"/>
</dbReference>
<dbReference type="RefSeq" id="WP_003246377.1">
    <property type="nucleotide sequence ID" value="NZ_OZ025638.1"/>
</dbReference>
<dbReference type="SMR" id="P96712"/>
<dbReference type="FunCoup" id="P96712">
    <property type="interactions" value="426"/>
</dbReference>
<dbReference type="STRING" id="224308.BSU03070"/>
<dbReference type="TCDB" id="2.A.1.3.50">
    <property type="family name" value="the major facilitator superfamily (mfs)"/>
</dbReference>
<dbReference type="PaxDb" id="224308-BSU03070"/>
<dbReference type="EnsemblBacteria" id="CAB12101">
    <property type="protein sequence ID" value="CAB12101"/>
    <property type="gene ID" value="BSU_03070"/>
</dbReference>
<dbReference type="GeneID" id="938345"/>
<dbReference type="KEGG" id="bsu:BSU03070"/>
<dbReference type="PATRIC" id="fig|224308.179.peg.321"/>
<dbReference type="eggNOG" id="COG2814">
    <property type="taxonomic scope" value="Bacteria"/>
</dbReference>
<dbReference type="InParanoid" id="P96712"/>
<dbReference type="OrthoDB" id="9807274at2"/>
<dbReference type="PhylomeDB" id="P96712"/>
<dbReference type="BioCyc" id="BSUB:BSU03070-MONOMER"/>
<dbReference type="Proteomes" id="UP000001570">
    <property type="component" value="Chromosome"/>
</dbReference>
<dbReference type="GO" id="GO:0005886">
    <property type="term" value="C:plasma membrane"/>
    <property type="evidence" value="ECO:0000318"/>
    <property type="project" value="GO_Central"/>
</dbReference>
<dbReference type="GO" id="GO:0022857">
    <property type="term" value="F:transmembrane transporter activity"/>
    <property type="evidence" value="ECO:0000318"/>
    <property type="project" value="GO_Central"/>
</dbReference>
<dbReference type="GO" id="GO:0046677">
    <property type="term" value="P:response to antibiotic"/>
    <property type="evidence" value="ECO:0007669"/>
    <property type="project" value="UniProtKB-KW"/>
</dbReference>
<dbReference type="GO" id="GO:0055085">
    <property type="term" value="P:transmembrane transport"/>
    <property type="evidence" value="ECO:0000318"/>
    <property type="project" value="GO_Central"/>
</dbReference>
<dbReference type="CDD" id="cd17502">
    <property type="entry name" value="MFS_Azr1_MDR_like"/>
    <property type="match status" value="1"/>
</dbReference>
<dbReference type="FunFam" id="1.20.1720.10:FF:000004">
    <property type="entry name" value="EmrB/QacA family drug resistance transporter"/>
    <property type="match status" value="1"/>
</dbReference>
<dbReference type="Gene3D" id="1.20.1250.20">
    <property type="entry name" value="MFS general substrate transporter like domains"/>
    <property type="match status" value="1"/>
</dbReference>
<dbReference type="Gene3D" id="1.20.1720.10">
    <property type="entry name" value="Multidrug resistance protein D"/>
    <property type="match status" value="1"/>
</dbReference>
<dbReference type="InterPro" id="IPR004638">
    <property type="entry name" value="EmrB-like"/>
</dbReference>
<dbReference type="InterPro" id="IPR011701">
    <property type="entry name" value="MFS"/>
</dbReference>
<dbReference type="InterPro" id="IPR020846">
    <property type="entry name" value="MFS_dom"/>
</dbReference>
<dbReference type="InterPro" id="IPR036259">
    <property type="entry name" value="MFS_trans_sf"/>
</dbReference>
<dbReference type="NCBIfam" id="TIGR00711">
    <property type="entry name" value="efflux_EmrB"/>
    <property type="match status" value="1"/>
</dbReference>
<dbReference type="PANTHER" id="PTHR23501">
    <property type="entry name" value="MAJOR FACILITATOR SUPERFAMILY"/>
    <property type="match status" value="1"/>
</dbReference>
<dbReference type="PANTHER" id="PTHR23501:SF170">
    <property type="entry name" value="MULTIDRUG RESISTANCE PROTEIN 3"/>
    <property type="match status" value="1"/>
</dbReference>
<dbReference type="Pfam" id="PF07690">
    <property type="entry name" value="MFS_1"/>
    <property type="match status" value="1"/>
</dbReference>
<dbReference type="SUPFAM" id="SSF103473">
    <property type="entry name" value="MFS general substrate transporter"/>
    <property type="match status" value="1"/>
</dbReference>
<dbReference type="PROSITE" id="PS50850">
    <property type="entry name" value="MFS"/>
    <property type="match status" value="1"/>
</dbReference>
<comment type="function">
    <text evidence="2">Confers resistance to puromycin, tosufloxacin and norfloxacin.</text>
</comment>
<comment type="subcellular location">
    <subcellularLocation>
        <location evidence="3">Cell membrane</location>
        <topology evidence="3">Multi-pass membrane protein</topology>
    </subcellularLocation>
</comment>
<comment type="induction">
    <text evidence="2">Expression is dependent on the growth phase and decreases in the late log phase.</text>
</comment>
<comment type="similarity">
    <text evidence="3">Belongs to the major facilitator superfamily. EmrB family.</text>
</comment>
<accession>P96712</accession>
<accession>O31471</accession>
<proteinExistence type="evidence at protein level"/>
<protein>
    <recommendedName>
        <fullName>Multidrug resistance protein 3</fullName>
    </recommendedName>
    <alternativeName>
        <fullName>Multidrug-efflux transporter 3</fullName>
    </alternativeName>
</protein>
<evidence type="ECO:0000255" key="1"/>
<evidence type="ECO:0000269" key="2">
    <source>
    </source>
</evidence>
<evidence type="ECO:0000305" key="3"/>
<gene>
    <name type="primary">bmr3</name>
    <name type="synonym">mdr</name>
    <name type="ordered locus">BSU03070</name>
</gene>
<reference key="1">
    <citation type="journal article" date="1997" name="J. Bacteriol.">
        <title>bmr3, a third multidrug transporter gene of Bacillus subtilis.</title>
        <authorList>
            <person name="Ohki R."/>
            <person name="Murata M."/>
        </authorList>
    </citation>
    <scope>NUCLEOTIDE SEQUENCE [GENOMIC DNA]</scope>
    <scope>FUNCTION AS A TRANSPORTER</scope>
    <scope>INDUCTION</scope>
    <source>
        <strain>168</strain>
    </source>
</reference>
<reference key="2">
    <citation type="journal article" date="1997" name="Nature">
        <title>The complete genome sequence of the Gram-positive bacterium Bacillus subtilis.</title>
        <authorList>
            <person name="Kunst F."/>
            <person name="Ogasawara N."/>
            <person name="Moszer I."/>
            <person name="Albertini A.M."/>
            <person name="Alloni G."/>
            <person name="Azevedo V."/>
            <person name="Bertero M.G."/>
            <person name="Bessieres P."/>
            <person name="Bolotin A."/>
            <person name="Borchert S."/>
            <person name="Borriss R."/>
            <person name="Boursier L."/>
            <person name="Brans A."/>
            <person name="Braun M."/>
            <person name="Brignell S.C."/>
            <person name="Bron S."/>
            <person name="Brouillet S."/>
            <person name="Bruschi C.V."/>
            <person name="Caldwell B."/>
            <person name="Capuano V."/>
            <person name="Carter N.M."/>
            <person name="Choi S.-K."/>
            <person name="Codani J.-J."/>
            <person name="Connerton I.F."/>
            <person name="Cummings N.J."/>
            <person name="Daniel R.A."/>
            <person name="Denizot F."/>
            <person name="Devine K.M."/>
            <person name="Duesterhoeft A."/>
            <person name="Ehrlich S.D."/>
            <person name="Emmerson P.T."/>
            <person name="Entian K.-D."/>
            <person name="Errington J."/>
            <person name="Fabret C."/>
            <person name="Ferrari E."/>
            <person name="Foulger D."/>
            <person name="Fritz C."/>
            <person name="Fujita M."/>
            <person name="Fujita Y."/>
            <person name="Fuma S."/>
            <person name="Galizzi A."/>
            <person name="Galleron N."/>
            <person name="Ghim S.-Y."/>
            <person name="Glaser P."/>
            <person name="Goffeau A."/>
            <person name="Golightly E.J."/>
            <person name="Grandi G."/>
            <person name="Guiseppi G."/>
            <person name="Guy B.J."/>
            <person name="Haga K."/>
            <person name="Haiech J."/>
            <person name="Harwood C.R."/>
            <person name="Henaut A."/>
            <person name="Hilbert H."/>
            <person name="Holsappel S."/>
            <person name="Hosono S."/>
            <person name="Hullo M.-F."/>
            <person name="Itaya M."/>
            <person name="Jones L.-M."/>
            <person name="Joris B."/>
            <person name="Karamata D."/>
            <person name="Kasahara Y."/>
            <person name="Klaerr-Blanchard M."/>
            <person name="Klein C."/>
            <person name="Kobayashi Y."/>
            <person name="Koetter P."/>
            <person name="Koningstein G."/>
            <person name="Krogh S."/>
            <person name="Kumano M."/>
            <person name="Kurita K."/>
            <person name="Lapidus A."/>
            <person name="Lardinois S."/>
            <person name="Lauber J."/>
            <person name="Lazarevic V."/>
            <person name="Lee S.-M."/>
            <person name="Levine A."/>
            <person name="Liu H."/>
            <person name="Masuda S."/>
            <person name="Mauel C."/>
            <person name="Medigue C."/>
            <person name="Medina N."/>
            <person name="Mellado R.P."/>
            <person name="Mizuno M."/>
            <person name="Moestl D."/>
            <person name="Nakai S."/>
            <person name="Noback M."/>
            <person name="Noone D."/>
            <person name="O'Reilly M."/>
            <person name="Ogawa K."/>
            <person name="Ogiwara A."/>
            <person name="Oudega B."/>
            <person name="Park S.-H."/>
            <person name="Parro V."/>
            <person name="Pohl T.M."/>
            <person name="Portetelle D."/>
            <person name="Porwollik S."/>
            <person name="Prescott A.M."/>
            <person name="Presecan E."/>
            <person name="Pujic P."/>
            <person name="Purnelle B."/>
            <person name="Rapoport G."/>
            <person name="Rey M."/>
            <person name="Reynolds S."/>
            <person name="Rieger M."/>
            <person name="Rivolta C."/>
            <person name="Rocha E."/>
            <person name="Roche B."/>
            <person name="Rose M."/>
            <person name="Sadaie Y."/>
            <person name="Sato T."/>
            <person name="Scanlan E."/>
            <person name="Schleich S."/>
            <person name="Schroeter R."/>
            <person name="Scoffone F."/>
            <person name="Sekiguchi J."/>
            <person name="Sekowska A."/>
            <person name="Seror S.J."/>
            <person name="Serror P."/>
            <person name="Shin B.-S."/>
            <person name="Soldo B."/>
            <person name="Sorokin A."/>
            <person name="Tacconi E."/>
            <person name="Takagi T."/>
            <person name="Takahashi H."/>
            <person name="Takemaru K."/>
            <person name="Takeuchi M."/>
            <person name="Tamakoshi A."/>
            <person name="Tanaka T."/>
            <person name="Terpstra P."/>
            <person name="Tognoni A."/>
            <person name="Tosato V."/>
            <person name="Uchiyama S."/>
            <person name="Vandenbol M."/>
            <person name="Vannier F."/>
            <person name="Vassarotti A."/>
            <person name="Viari A."/>
            <person name="Wambutt R."/>
            <person name="Wedler E."/>
            <person name="Wedler H."/>
            <person name="Weitzenegger T."/>
            <person name="Winters P."/>
            <person name="Wipat A."/>
            <person name="Yamamoto H."/>
            <person name="Yamane K."/>
            <person name="Yasumoto K."/>
            <person name="Yata K."/>
            <person name="Yoshida K."/>
            <person name="Yoshikawa H.-F."/>
            <person name="Zumstein E."/>
            <person name="Yoshikawa H."/>
            <person name="Danchin A."/>
        </authorList>
    </citation>
    <scope>NUCLEOTIDE SEQUENCE [LARGE SCALE GENOMIC DNA]</scope>
    <source>
        <strain>168</strain>
    </source>
</reference>
<reference key="3">
    <citation type="journal article" date="2009" name="Microbiology">
        <title>From a consortium sequence to a unified sequence: the Bacillus subtilis 168 reference genome a decade later.</title>
        <authorList>
            <person name="Barbe V."/>
            <person name="Cruveiller S."/>
            <person name="Kunst F."/>
            <person name="Lenoble P."/>
            <person name="Meurice G."/>
            <person name="Sekowska A."/>
            <person name="Vallenet D."/>
            <person name="Wang T."/>
            <person name="Moszer I."/>
            <person name="Medigue C."/>
            <person name="Danchin A."/>
        </authorList>
    </citation>
    <scope>SEQUENCE REVISION</scope>
</reference>
<organism>
    <name type="scientific">Bacillus subtilis (strain 168)</name>
    <dbReference type="NCBI Taxonomy" id="224308"/>
    <lineage>
        <taxon>Bacteria</taxon>
        <taxon>Bacillati</taxon>
        <taxon>Bacillota</taxon>
        <taxon>Bacilli</taxon>
        <taxon>Bacillales</taxon>
        <taxon>Bacillaceae</taxon>
        <taxon>Bacillus</taxon>
    </lineage>
</organism>
<feature type="chain" id="PRO_0000375916" description="Multidrug resistance protein 3">
    <location>
        <begin position="1"/>
        <end position="512"/>
    </location>
</feature>
<feature type="transmembrane region" description="Helical" evidence="1">
    <location>
        <begin position="13"/>
        <end position="33"/>
    </location>
</feature>
<feature type="transmembrane region" description="Helical" evidence="1">
    <location>
        <begin position="48"/>
        <end position="68"/>
    </location>
</feature>
<feature type="transmembrane region" description="Helical" evidence="1">
    <location>
        <begin position="79"/>
        <end position="99"/>
    </location>
</feature>
<feature type="transmembrane region" description="Helical" evidence="1">
    <location>
        <begin position="109"/>
        <end position="129"/>
    </location>
</feature>
<feature type="transmembrane region" description="Helical" evidence="1">
    <location>
        <begin position="139"/>
        <end position="159"/>
    </location>
</feature>
<feature type="transmembrane region" description="Helical" evidence="1">
    <location>
        <begin position="163"/>
        <end position="183"/>
    </location>
</feature>
<feature type="transmembrane region" description="Helical" evidence="1">
    <location>
        <begin position="200"/>
        <end position="220"/>
    </location>
</feature>
<feature type="transmembrane region" description="Helical" evidence="1">
    <location>
        <begin position="228"/>
        <end position="248"/>
    </location>
</feature>
<feature type="transmembrane region" description="Helical" evidence="1">
    <location>
        <begin position="272"/>
        <end position="292"/>
    </location>
</feature>
<feature type="transmembrane region" description="Helical" evidence="1">
    <location>
        <begin position="304"/>
        <end position="324"/>
    </location>
</feature>
<feature type="transmembrane region" description="Helical" evidence="1">
    <location>
        <begin position="333"/>
        <end position="353"/>
    </location>
</feature>
<feature type="transmembrane region" description="Helical" evidence="1">
    <location>
        <begin position="358"/>
        <end position="378"/>
    </location>
</feature>
<feature type="transmembrane region" description="Helical" evidence="1">
    <location>
        <begin position="399"/>
        <end position="421"/>
    </location>
</feature>
<feature type="transmembrane region" description="Helical" evidence="1">
    <location>
        <begin position="475"/>
        <end position="495"/>
    </location>
</feature>
<name>BMR3_BACSU</name>
<keyword id="KW-0046">Antibiotic resistance</keyword>
<keyword id="KW-1003">Cell membrane</keyword>
<keyword id="KW-0472">Membrane</keyword>
<keyword id="KW-1185">Reference proteome</keyword>
<keyword id="KW-0812">Transmembrane</keyword>
<keyword id="KW-1133">Transmembrane helix</keyword>
<keyword id="KW-0813">Transport</keyword>